<sequence>MDSFVLDAQNPNPKNLKNLLKYEEQLERQHVSLDNILGALDVRNHSLGQLLVLKAKGSDQGKNRSVFIDQCNNFFRNCNVEQVRLAPAQLSQLSKFYTEALYELKQPIRGVAVLKDALNILSDNKPTTTLTPIHTDFLQLCILSKCYHQALPLIESNITHINPEQSSIAIKDILCYFYYSGIIFTAFKKYKKAIEAFKFVITAPASALSAITVEAYKKYLIVYLIQFGSVQHFPKCTPAVVQRNIKSHCKPYTEFVQSFSNGNINDIMNKASSGAEFFQKDSNWGLVKLSIKSTYRRNIKKLTQTFMTLSINDIAEKVSLPKAKAEQFVLKMIEEGEIFATINQKDGMVTFDECFEDFSGPTILNDLDRNINNIVGLESKIKEMDEKISLSNNYLKKLASGKNTGQLSQYEDPMEDIS</sequence>
<comment type="function">
    <text>Component of the COP9 signalosome complex (CSN), a complex involved in various cellular and developmental processes. The CSN complex is an essential regulator of the ubiquitin (Ubl) conjugation pathway by mediating the deneddylation of the cullin subunits of E3 ligase complexes, leading to modify the Ubl ligase activity.</text>
</comment>
<comment type="subunit">
    <text evidence="3">Component of the CSN complex. The holocomplex is comprised of 8 subunits csn1-8. In the complex, it probably interacts directly with csn2 and csn5.</text>
</comment>
<comment type="subcellular location">
    <subcellularLocation>
        <location evidence="1">Cytoplasm</location>
    </subcellularLocation>
    <subcellularLocation>
        <location evidence="1">Nucleus</location>
    </subcellularLocation>
</comment>
<comment type="similarity">
    <text evidence="4">Belongs to the CSN3 family.</text>
</comment>
<keyword id="KW-0963">Cytoplasm</keyword>
<keyword id="KW-0539">Nucleus</keyword>
<keyword id="KW-1185">Reference proteome</keyword>
<keyword id="KW-0736">Signalosome</keyword>
<protein>
    <recommendedName>
        <fullName>COP9 signalosome complex subunit 3</fullName>
        <shortName>Signalosome subunit 3</shortName>
    </recommendedName>
</protein>
<reference key="1">
    <citation type="journal article" date="2006" name="Eur. J. Cell Biol.">
        <title>The COP9 signalosome regulates cell proliferation of Dictyostelium discoideum.</title>
        <authorList>
            <person name="Rosel D."/>
            <person name="Kimmel A.R."/>
        </authorList>
    </citation>
    <scope>NUCLEOTIDE SEQUENCE [MRNA]</scope>
    <scope>IDENTIFICATION IN THE CSN COMPLEX</scope>
</reference>
<reference key="2">
    <citation type="journal article" date="2005" name="Nature">
        <title>The genome of the social amoeba Dictyostelium discoideum.</title>
        <authorList>
            <person name="Eichinger L."/>
            <person name="Pachebat J.A."/>
            <person name="Gloeckner G."/>
            <person name="Rajandream M.A."/>
            <person name="Sucgang R."/>
            <person name="Berriman M."/>
            <person name="Song J."/>
            <person name="Olsen R."/>
            <person name="Szafranski K."/>
            <person name="Xu Q."/>
            <person name="Tunggal B."/>
            <person name="Kummerfeld S."/>
            <person name="Madera M."/>
            <person name="Konfortov B.A."/>
            <person name="Rivero F."/>
            <person name="Bankier A.T."/>
            <person name="Lehmann R."/>
            <person name="Hamlin N."/>
            <person name="Davies R."/>
            <person name="Gaudet P."/>
            <person name="Fey P."/>
            <person name="Pilcher K."/>
            <person name="Chen G."/>
            <person name="Saunders D."/>
            <person name="Sodergren E.J."/>
            <person name="Davis P."/>
            <person name="Kerhornou A."/>
            <person name="Nie X."/>
            <person name="Hall N."/>
            <person name="Anjard C."/>
            <person name="Hemphill L."/>
            <person name="Bason N."/>
            <person name="Farbrother P."/>
            <person name="Desany B."/>
            <person name="Just E."/>
            <person name="Morio T."/>
            <person name="Rost R."/>
            <person name="Churcher C.M."/>
            <person name="Cooper J."/>
            <person name="Haydock S."/>
            <person name="van Driessche N."/>
            <person name="Cronin A."/>
            <person name="Goodhead I."/>
            <person name="Muzny D.M."/>
            <person name="Mourier T."/>
            <person name="Pain A."/>
            <person name="Lu M."/>
            <person name="Harper D."/>
            <person name="Lindsay R."/>
            <person name="Hauser H."/>
            <person name="James K.D."/>
            <person name="Quiles M."/>
            <person name="Madan Babu M."/>
            <person name="Saito T."/>
            <person name="Buchrieser C."/>
            <person name="Wardroper A."/>
            <person name="Felder M."/>
            <person name="Thangavelu M."/>
            <person name="Johnson D."/>
            <person name="Knights A."/>
            <person name="Loulseged H."/>
            <person name="Mungall K.L."/>
            <person name="Oliver K."/>
            <person name="Price C."/>
            <person name="Quail M.A."/>
            <person name="Urushihara H."/>
            <person name="Hernandez J."/>
            <person name="Rabbinowitsch E."/>
            <person name="Steffen D."/>
            <person name="Sanders M."/>
            <person name="Ma J."/>
            <person name="Kohara Y."/>
            <person name="Sharp S."/>
            <person name="Simmonds M.N."/>
            <person name="Spiegler S."/>
            <person name="Tivey A."/>
            <person name="Sugano S."/>
            <person name="White B."/>
            <person name="Walker D."/>
            <person name="Woodward J.R."/>
            <person name="Winckler T."/>
            <person name="Tanaka Y."/>
            <person name="Shaulsky G."/>
            <person name="Schleicher M."/>
            <person name="Weinstock G.M."/>
            <person name="Rosenthal A."/>
            <person name="Cox E.C."/>
            <person name="Chisholm R.L."/>
            <person name="Gibbs R.A."/>
            <person name="Loomis W.F."/>
            <person name="Platzer M."/>
            <person name="Kay R.R."/>
            <person name="Williams J.G."/>
            <person name="Dear P.H."/>
            <person name="Noegel A.A."/>
            <person name="Barrell B.G."/>
            <person name="Kuspa A."/>
        </authorList>
    </citation>
    <scope>NUCLEOTIDE SEQUENCE [LARGE SCALE GENOMIC DNA]</scope>
    <source>
        <strain>AX4</strain>
    </source>
</reference>
<gene>
    <name type="primary">csn3</name>
    <name type="ORF">DDB_G0291848</name>
</gene>
<accession>Q54E53</accession>
<accession>Q2PQ76</accession>
<proteinExistence type="evidence at protein level"/>
<name>CSN3_DICDI</name>
<feature type="chain" id="PRO_0000327772" description="COP9 signalosome complex subunit 3">
    <location>
        <begin position="1"/>
        <end position="418"/>
    </location>
</feature>
<feature type="domain" description="PCI" evidence="2">
    <location>
        <begin position="186"/>
        <end position="356"/>
    </location>
</feature>
<organism>
    <name type="scientific">Dictyostelium discoideum</name>
    <name type="common">Social amoeba</name>
    <dbReference type="NCBI Taxonomy" id="44689"/>
    <lineage>
        <taxon>Eukaryota</taxon>
        <taxon>Amoebozoa</taxon>
        <taxon>Evosea</taxon>
        <taxon>Eumycetozoa</taxon>
        <taxon>Dictyostelia</taxon>
        <taxon>Dictyosteliales</taxon>
        <taxon>Dictyosteliaceae</taxon>
        <taxon>Dictyostelium</taxon>
    </lineage>
</organism>
<evidence type="ECO:0000250" key="1"/>
<evidence type="ECO:0000255" key="2">
    <source>
        <dbReference type="PROSITE-ProRule" id="PRU01185"/>
    </source>
</evidence>
<evidence type="ECO:0000269" key="3">
    <source>
    </source>
</evidence>
<evidence type="ECO:0000305" key="4"/>
<dbReference type="EMBL" id="DQ309431">
    <property type="protein sequence ID" value="ABC46695.1"/>
    <property type="molecule type" value="mRNA"/>
</dbReference>
<dbReference type="EMBL" id="AAFI02000185">
    <property type="protein sequence ID" value="EAL61545.1"/>
    <property type="molecule type" value="Genomic_DNA"/>
</dbReference>
<dbReference type="RefSeq" id="XP_629934.1">
    <property type="nucleotide sequence ID" value="XM_629932.1"/>
</dbReference>
<dbReference type="SMR" id="Q54E53"/>
<dbReference type="FunCoup" id="Q54E53">
    <property type="interactions" value="1163"/>
</dbReference>
<dbReference type="STRING" id="44689.Q54E53"/>
<dbReference type="PaxDb" id="44689-DDB0233101"/>
<dbReference type="EnsemblProtists" id="EAL61545">
    <property type="protein sequence ID" value="EAL61545"/>
    <property type="gene ID" value="DDB_G0291848"/>
</dbReference>
<dbReference type="GeneID" id="8628339"/>
<dbReference type="KEGG" id="ddi:DDB_G0291848"/>
<dbReference type="dictyBase" id="DDB_G0291848">
    <property type="gene designation" value="csn3"/>
</dbReference>
<dbReference type="VEuPathDB" id="AmoebaDB:DDB_G0291848"/>
<dbReference type="eggNOG" id="KOG2582">
    <property type="taxonomic scope" value="Eukaryota"/>
</dbReference>
<dbReference type="HOGENOM" id="CLU_028825_0_1_1"/>
<dbReference type="InParanoid" id="Q54E53"/>
<dbReference type="OMA" id="NHYHDLV"/>
<dbReference type="PhylomeDB" id="Q54E53"/>
<dbReference type="Reactome" id="R-DDI-5696394">
    <property type="pathway name" value="DNA Damage Recognition in GG-NER"/>
</dbReference>
<dbReference type="Reactome" id="R-DDI-6781823">
    <property type="pathway name" value="Formation of TC-NER Pre-Incision Complex"/>
</dbReference>
<dbReference type="Reactome" id="R-DDI-8856825">
    <property type="pathway name" value="Cargo recognition for clathrin-mediated endocytosis"/>
</dbReference>
<dbReference type="Reactome" id="R-DDI-8951664">
    <property type="pathway name" value="Neddylation"/>
</dbReference>
<dbReference type="PRO" id="PR:Q54E53"/>
<dbReference type="Proteomes" id="UP000002195">
    <property type="component" value="Chromosome 6"/>
</dbReference>
<dbReference type="GO" id="GO:0008180">
    <property type="term" value="C:COP9 signalosome"/>
    <property type="evidence" value="ECO:0000353"/>
    <property type="project" value="dictyBase"/>
</dbReference>
<dbReference type="GO" id="GO:0005737">
    <property type="term" value="C:cytoplasm"/>
    <property type="evidence" value="ECO:0007669"/>
    <property type="project" value="UniProtKB-SubCell"/>
</dbReference>
<dbReference type="GO" id="GO:0006511">
    <property type="term" value="P:ubiquitin-dependent protein catabolic process"/>
    <property type="evidence" value="ECO:0000318"/>
    <property type="project" value="GO_Central"/>
</dbReference>
<dbReference type="FunFam" id="1.10.10.10:FF:000354">
    <property type="entry name" value="COP9 signalosome complex subunit 3"/>
    <property type="match status" value="1"/>
</dbReference>
<dbReference type="Gene3D" id="1.10.10.10">
    <property type="entry name" value="Winged helix-like DNA-binding domain superfamily/Winged helix DNA-binding domain"/>
    <property type="match status" value="1"/>
</dbReference>
<dbReference type="InterPro" id="IPR055089">
    <property type="entry name" value="COP9_N"/>
</dbReference>
<dbReference type="InterPro" id="IPR050756">
    <property type="entry name" value="CSN3"/>
</dbReference>
<dbReference type="InterPro" id="IPR000717">
    <property type="entry name" value="PCI_dom"/>
</dbReference>
<dbReference type="InterPro" id="IPR036388">
    <property type="entry name" value="WH-like_DNA-bd_sf"/>
</dbReference>
<dbReference type="InterPro" id="IPR036390">
    <property type="entry name" value="WH_DNA-bd_sf"/>
</dbReference>
<dbReference type="PANTHER" id="PTHR10758">
    <property type="entry name" value="26S PROTEASOME NON-ATPASE REGULATORY SUBUNIT 3/COP9 SIGNALOSOME COMPLEX SUBUNIT 3"/>
    <property type="match status" value="1"/>
</dbReference>
<dbReference type="PANTHER" id="PTHR10758:SF1">
    <property type="entry name" value="COP9 SIGNALOSOME COMPLEX SUBUNIT 3"/>
    <property type="match status" value="1"/>
</dbReference>
<dbReference type="Pfam" id="PF22788">
    <property type="entry name" value="COP9_hel_rpt"/>
    <property type="match status" value="1"/>
</dbReference>
<dbReference type="Pfam" id="PF01399">
    <property type="entry name" value="PCI"/>
    <property type="match status" value="1"/>
</dbReference>
<dbReference type="SMART" id="SM00088">
    <property type="entry name" value="PINT"/>
    <property type="match status" value="1"/>
</dbReference>
<dbReference type="SUPFAM" id="SSF46785">
    <property type="entry name" value="Winged helix' DNA-binding domain"/>
    <property type="match status" value="1"/>
</dbReference>
<dbReference type="PROSITE" id="PS50250">
    <property type="entry name" value="PCI"/>
    <property type="match status" value="1"/>
</dbReference>